<name>PME29_ARATH</name>
<feature type="signal peptide" evidence="2">
    <location>
        <begin position="1"/>
        <end position="24"/>
    </location>
</feature>
<feature type="chain" id="PRO_0000371682" description="Probable pectinesterase 29">
    <location>
        <begin position="25"/>
        <end position="335"/>
    </location>
</feature>
<feature type="active site" description="Proton donor" evidence="3">
    <location>
        <position position="166"/>
    </location>
</feature>
<feature type="active site" description="Nucleophile" evidence="3">
    <location>
        <position position="187"/>
    </location>
</feature>
<feature type="binding site" evidence="1">
    <location>
        <position position="248"/>
    </location>
    <ligand>
        <name>substrate</name>
    </ligand>
</feature>
<feature type="binding site" evidence="1">
    <location>
        <position position="250"/>
    </location>
    <ligand>
        <name>substrate</name>
    </ligand>
</feature>
<feature type="site" description="Transition state stabilizer" evidence="1">
    <location>
        <position position="165"/>
    </location>
</feature>
<feature type="glycosylation site" description="N-linked (GlcNAc...) asparagine" evidence="2">
    <location>
        <position position="43"/>
    </location>
</feature>
<feature type="glycosylation site" description="N-linked (GlcNAc...) asparagine" evidence="2">
    <location>
        <position position="262"/>
    </location>
</feature>
<accession>Q4PSN0</accession>
<accession>Q9LRN4</accession>
<dbReference type="EC" id="3.1.1.11"/>
<dbReference type="EMBL" id="AB028621">
    <property type="protein sequence ID" value="BAB01354.1"/>
    <property type="status" value="ALT_SEQ"/>
    <property type="molecule type" value="Genomic_DNA"/>
</dbReference>
<dbReference type="EMBL" id="CP002686">
    <property type="protein sequence ID" value="AEE76861.1"/>
    <property type="molecule type" value="Genomic_DNA"/>
</dbReference>
<dbReference type="EMBL" id="DQ056606">
    <property type="protein sequence ID" value="AAY78754.1"/>
    <property type="molecule type" value="mRNA"/>
</dbReference>
<dbReference type="RefSeq" id="NP_189055.1">
    <property type="nucleotide sequence ID" value="NM_113318.2"/>
</dbReference>
<dbReference type="SMR" id="Q4PSN0"/>
<dbReference type="FunCoup" id="Q4PSN0">
    <property type="interactions" value="69"/>
</dbReference>
<dbReference type="STRING" id="3702.Q4PSN0"/>
<dbReference type="GlyCosmos" id="Q4PSN0">
    <property type="glycosylation" value="2 sites, No reported glycans"/>
</dbReference>
<dbReference type="GlyGen" id="Q4PSN0">
    <property type="glycosylation" value="2 sites"/>
</dbReference>
<dbReference type="iPTMnet" id="Q4PSN0"/>
<dbReference type="PaxDb" id="3702-AT3G24130.1"/>
<dbReference type="ProteomicsDB" id="226274"/>
<dbReference type="EnsemblPlants" id="AT3G24130.1">
    <property type="protein sequence ID" value="AT3G24130.1"/>
    <property type="gene ID" value="AT3G24130"/>
</dbReference>
<dbReference type="GeneID" id="821999"/>
<dbReference type="Gramene" id="AT3G24130.1">
    <property type="protein sequence ID" value="AT3G24130.1"/>
    <property type="gene ID" value="AT3G24130"/>
</dbReference>
<dbReference type="KEGG" id="ath:AT3G24130"/>
<dbReference type="Araport" id="AT3G24130"/>
<dbReference type="TAIR" id="AT3G24130"/>
<dbReference type="eggNOG" id="ENOG502QVK0">
    <property type="taxonomic scope" value="Eukaryota"/>
</dbReference>
<dbReference type="HOGENOM" id="CLU_012243_3_0_1"/>
<dbReference type="InParanoid" id="Q4PSN0"/>
<dbReference type="OMA" id="KNCNVFG"/>
<dbReference type="OrthoDB" id="2019149at2759"/>
<dbReference type="PhylomeDB" id="Q4PSN0"/>
<dbReference type="BioCyc" id="ARA:AT3G24130-MONOMER"/>
<dbReference type="UniPathway" id="UPA00545">
    <property type="reaction ID" value="UER00823"/>
</dbReference>
<dbReference type="PRO" id="PR:Q4PSN0"/>
<dbReference type="Proteomes" id="UP000006548">
    <property type="component" value="Chromosome 3"/>
</dbReference>
<dbReference type="ExpressionAtlas" id="Q4PSN0">
    <property type="expression patterns" value="baseline and differential"/>
</dbReference>
<dbReference type="GO" id="GO:0005576">
    <property type="term" value="C:extracellular region"/>
    <property type="evidence" value="ECO:0007669"/>
    <property type="project" value="UniProtKB-KW"/>
</dbReference>
<dbReference type="GO" id="GO:0030599">
    <property type="term" value="F:pectinesterase activity"/>
    <property type="evidence" value="ECO:0007669"/>
    <property type="project" value="UniProtKB-EC"/>
</dbReference>
<dbReference type="GO" id="GO:0042545">
    <property type="term" value="P:cell wall modification"/>
    <property type="evidence" value="ECO:0007669"/>
    <property type="project" value="InterPro"/>
</dbReference>
<dbReference type="GO" id="GO:0045490">
    <property type="term" value="P:pectin catabolic process"/>
    <property type="evidence" value="ECO:0007669"/>
    <property type="project" value="UniProtKB-UniPathway"/>
</dbReference>
<dbReference type="FunFam" id="2.160.20.10:FF:000013">
    <property type="entry name" value="Pectinesterase"/>
    <property type="match status" value="1"/>
</dbReference>
<dbReference type="Gene3D" id="2.160.20.10">
    <property type="entry name" value="Single-stranded right-handed beta-helix, Pectin lyase-like"/>
    <property type="match status" value="1"/>
</dbReference>
<dbReference type="InterPro" id="IPR012334">
    <property type="entry name" value="Pectin_lyas_fold"/>
</dbReference>
<dbReference type="InterPro" id="IPR011050">
    <property type="entry name" value="Pectin_lyase_fold/virulence"/>
</dbReference>
<dbReference type="InterPro" id="IPR033131">
    <property type="entry name" value="Pectinesterase_Asp_AS"/>
</dbReference>
<dbReference type="InterPro" id="IPR000070">
    <property type="entry name" value="Pectinesterase_cat"/>
</dbReference>
<dbReference type="PANTHER" id="PTHR31321">
    <property type="entry name" value="ACYL-COA THIOESTER HYDROLASE YBHC-RELATED"/>
    <property type="match status" value="1"/>
</dbReference>
<dbReference type="PANTHER" id="PTHR31321:SF76">
    <property type="entry name" value="PECTINESTERASE 10-RELATED"/>
    <property type="match status" value="1"/>
</dbReference>
<dbReference type="Pfam" id="PF01095">
    <property type="entry name" value="Pectinesterase"/>
    <property type="match status" value="1"/>
</dbReference>
<dbReference type="SUPFAM" id="SSF51126">
    <property type="entry name" value="Pectin lyase-like"/>
    <property type="match status" value="1"/>
</dbReference>
<dbReference type="PROSITE" id="PS00503">
    <property type="entry name" value="PECTINESTERASE_2"/>
    <property type="match status" value="1"/>
</dbReference>
<gene>
    <name type="primary">PME29</name>
    <name type="synonym">ARATH29</name>
    <name type="ordered locus">At3g24130</name>
    <name type="ORF">MUJ8.16</name>
</gene>
<reference key="1">
    <citation type="journal article" date="2000" name="DNA Res.">
        <title>Structural analysis of Arabidopsis thaliana chromosome 3. I. Sequence features of the regions of 4,504,864 bp covered by sixty P1 and TAC clones.</title>
        <authorList>
            <person name="Sato S."/>
            <person name="Nakamura Y."/>
            <person name="Kaneko T."/>
            <person name="Katoh T."/>
            <person name="Asamizu E."/>
            <person name="Tabata S."/>
        </authorList>
    </citation>
    <scope>NUCLEOTIDE SEQUENCE [LARGE SCALE GENOMIC DNA]</scope>
    <source>
        <strain>cv. Columbia</strain>
    </source>
</reference>
<reference key="2">
    <citation type="journal article" date="2017" name="Plant J.">
        <title>Araport11: a complete reannotation of the Arabidopsis thaliana reference genome.</title>
        <authorList>
            <person name="Cheng C.Y."/>
            <person name="Krishnakumar V."/>
            <person name="Chan A.P."/>
            <person name="Thibaud-Nissen F."/>
            <person name="Schobel S."/>
            <person name="Town C.D."/>
        </authorList>
    </citation>
    <scope>GENOME REANNOTATION</scope>
    <source>
        <strain>cv. Columbia</strain>
    </source>
</reference>
<reference key="3">
    <citation type="submission" date="2005-05" db="EMBL/GenBank/DDBJ databases">
        <authorList>
            <person name="Underwood B.A."/>
            <person name="Xiao Y.-L."/>
            <person name="Moskal W.A. Jr."/>
            <person name="Monaghan E.L."/>
            <person name="Wang W."/>
            <person name="Redman J.C."/>
            <person name="Wu H.C."/>
            <person name="Utterback T."/>
            <person name="Town C.D."/>
        </authorList>
    </citation>
    <scope>NUCLEOTIDE SEQUENCE [LARGE SCALE MRNA]</scope>
    <source>
        <strain>cv. Columbia</strain>
    </source>
</reference>
<reference key="4">
    <citation type="journal article" date="2004" name="Carbohydr. Res.">
        <title>Pectin methylesterases: sequence-structural features and phylogenetic relationships.</title>
        <authorList>
            <person name="Markovic O."/>
            <person name="Janecek S."/>
        </authorList>
    </citation>
    <scope>GENE FAMILY</scope>
    <scope>NOMENCLATURE</scope>
</reference>
<reference key="5">
    <citation type="journal article" date="2006" name="Planta">
        <title>Comprehensive expression profiling of the pectin methylesterase gene family during silique development in Arabidopsis thaliana.</title>
        <authorList>
            <person name="Louvet R."/>
            <person name="Cavel E."/>
            <person name="Gutierrez L."/>
            <person name="Guenin S."/>
            <person name="Roger D."/>
            <person name="Gillet F."/>
            <person name="Guerineau F."/>
            <person name="Pelloux J."/>
        </authorList>
    </citation>
    <scope>TISSUE SPECIFICITY</scope>
    <scope>DEVELOPMENTAL STAGE</scope>
</reference>
<proteinExistence type="evidence at transcript level"/>
<comment type="function">
    <text evidence="1">Acts in the modification of cell walls via demethylesterification of cell wall pectin.</text>
</comment>
<comment type="catalytic activity">
    <reaction>
        <text>[(1-&gt;4)-alpha-D-galacturonosyl methyl ester](n) + n H2O = [(1-&gt;4)-alpha-D-galacturonosyl](n) + n methanol + n H(+)</text>
        <dbReference type="Rhea" id="RHEA:22380"/>
        <dbReference type="Rhea" id="RHEA-COMP:14570"/>
        <dbReference type="Rhea" id="RHEA-COMP:14573"/>
        <dbReference type="ChEBI" id="CHEBI:15377"/>
        <dbReference type="ChEBI" id="CHEBI:15378"/>
        <dbReference type="ChEBI" id="CHEBI:17790"/>
        <dbReference type="ChEBI" id="CHEBI:140522"/>
        <dbReference type="ChEBI" id="CHEBI:140523"/>
        <dbReference type="EC" id="3.1.1.11"/>
    </reaction>
</comment>
<comment type="pathway">
    <text>Glycan metabolism; pectin degradation; 2-dehydro-3-deoxy-D-gluconate from pectin: step 1/5.</text>
</comment>
<comment type="subcellular location">
    <subcellularLocation>
        <location evidence="1">Secreted</location>
        <location evidence="1">Cell wall</location>
    </subcellularLocation>
</comment>
<comment type="tissue specificity">
    <text evidence="4">Expressed in flower buds.</text>
</comment>
<comment type="similarity">
    <text evidence="5">Belongs to the pectinesterase family.</text>
</comment>
<comment type="sequence caution" evidence="5">
    <conflict type="erroneous gene model prediction">
        <sequence resource="EMBL-CDS" id="BAB01354"/>
    </conflict>
</comment>
<protein>
    <recommendedName>
        <fullName>Probable pectinesterase 29</fullName>
        <shortName>PE 29</shortName>
        <ecNumber>3.1.1.11</ecNumber>
    </recommendedName>
    <alternativeName>
        <fullName>Pectin methylesterase 29</fullName>
        <shortName>AtPME29</shortName>
    </alternativeName>
</protein>
<sequence length="335" mass="37272">MGTHRIFIGLIALCCFCLPHLIEAKPFGVYQQQVFVDQSGHGNFTTIQKAIDSVPINNRHWFFINVKAGLYREKIKIPYEKPFIVLVGAGKRLTRVEWDDHYSVAQSPTFSTLADNTVVKSITFANSYNFPSKGKMNKNPRTPAVAALIGGDKSAFYSVGFAGIQDTLWDFDGRHYFHRCTIQGAVDFIFGTGQSIYQSCVIQVLGGQLEPGLAGYITAQGRTNPYDANGFIFINCLVYGTGMAFLGRPWRGYSRVIFYNSNLTDVVVPEGWDAWNFVGHENQLVFAEHGCFGSGANIGRRVKWVKKLSESAIQNLADLSFINRGGWVEDLPIPA</sequence>
<evidence type="ECO:0000250" key="1"/>
<evidence type="ECO:0000255" key="2"/>
<evidence type="ECO:0000255" key="3">
    <source>
        <dbReference type="PROSITE-ProRule" id="PRU10040"/>
    </source>
</evidence>
<evidence type="ECO:0000269" key="4">
    <source>
    </source>
</evidence>
<evidence type="ECO:0000305" key="5"/>
<organism>
    <name type="scientific">Arabidopsis thaliana</name>
    <name type="common">Mouse-ear cress</name>
    <dbReference type="NCBI Taxonomy" id="3702"/>
    <lineage>
        <taxon>Eukaryota</taxon>
        <taxon>Viridiplantae</taxon>
        <taxon>Streptophyta</taxon>
        <taxon>Embryophyta</taxon>
        <taxon>Tracheophyta</taxon>
        <taxon>Spermatophyta</taxon>
        <taxon>Magnoliopsida</taxon>
        <taxon>eudicotyledons</taxon>
        <taxon>Gunneridae</taxon>
        <taxon>Pentapetalae</taxon>
        <taxon>rosids</taxon>
        <taxon>malvids</taxon>
        <taxon>Brassicales</taxon>
        <taxon>Brassicaceae</taxon>
        <taxon>Camelineae</taxon>
        <taxon>Arabidopsis</taxon>
    </lineage>
</organism>
<keyword id="KW-0063">Aspartyl esterase</keyword>
<keyword id="KW-0134">Cell wall</keyword>
<keyword id="KW-0961">Cell wall biogenesis/degradation</keyword>
<keyword id="KW-0325">Glycoprotein</keyword>
<keyword id="KW-0378">Hydrolase</keyword>
<keyword id="KW-1185">Reference proteome</keyword>
<keyword id="KW-0964">Secreted</keyword>
<keyword id="KW-0732">Signal</keyword>